<sequence length="130" mass="14491">MAQVQYYGTGRRKSSVARVRLVPGEGRVIINGRDFENYIPFAALREVVKQPLVATETLGNYDVLVNVNGGGYTGQAGAIRHGISRALLKADPEYRLTLKRAGLLTRDARMKERKKYGLKGARRAPQFSKR</sequence>
<dbReference type="EMBL" id="CP001283">
    <property type="protein sequence ID" value="ACK88054.1"/>
    <property type="molecule type" value="Genomic_DNA"/>
</dbReference>
<dbReference type="RefSeq" id="WP_000079986.1">
    <property type="nucleotide sequence ID" value="NC_011773.1"/>
</dbReference>
<dbReference type="SMR" id="B7JKF4"/>
<dbReference type="GeneID" id="93010909"/>
<dbReference type="KEGG" id="bcu:BCAH820_0157"/>
<dbReference type="HOGENOM" id="CLU_046483_2_1_9"/>
<dbReference type="Proteomes" id="UP000001363">
    <property type="component" value="Chromosome"/>
</dbReference>
<dbReference type="GO" id="GO:0022627">
    <property type="term" value="C:cytosolic small ribosomal subunit"/>
    <property type="evidence" value="ECO:0007669"/>
    <property type="project" value="TreeGrafter"/>
</dbReference>
<dbReference type="GO" id="GO:0003723">
    <property type="term" value="F:RNA binding"/>
    <property type="evidence" value="ECO:0007669"/>
    <property type="project" value="TreeGrafter"/>
</dbReference>
<dbReference type="GO" id="GO:0003735">
    <property type="term" value="F:structural constituent of ribosome"/>
    <property type="evidence" value="ECO:0007669"/>
    <property type="project" value="InterPro"/>
</dbReference>
<dbReference type="GO" id="GO:0006412">
    <property type="term" value="P:translation"/>
    <property type="evidence" value="ECO:0007669"/>
    <property type="project" value="UniProtKB-UniRule"/>
</dbReference>
<dbReference type="FunFam" id="3.30.230.10:FF:000001">
    <property type="entry name" value="30S ribosomal protein S9"/>
    <property type="match status" value="1"/>
</dbReference>
<dbReference type="Gene3D" id="3.30.230.10">
    <property type="match status" value="1"/>
</dbReference>
<dbReference type="HAMAP" id="MF_00532_B">
    <property type="entry name" value="Ribosomal_uS9_B"/>
    <property type="match status" value="1"/>
</dbReference>
<dbReference type="InterPro" id="IPR020568">
    <property type="entry name" value="Ribosomal_Su5_D2-typ_SF"/>
</dbReference>
<dbReference type="InterPro" id="IPR000754">
    <property type="entry name" value="Ribosomal_uS9"/>
</dbReference>
<dbReference type="InterPro" id="IPR023035">
    <property type="entry name" value="Ribosomal_uS9_bac/plastid"/>
</dbReference>
<dbReference type="InterPro" id="IPR020574">
    <property type="entry name" value="Ribosomal_uS9_CS"/>
</dbReference>
<dbReference type="InterPro" id="IPR014721">
    <property type="entry name" value="Ribsml_uS5_D2-typ_fold_subgr"/>
</dbReference>
<dbReference type="NCBIfam" id="NF001099">
    <property type="entry name" value="PRK00132.1"/>
    <property type="match status" value="1"/>
</dbReference>
<dbReference type="PANTHER" id="PTHR21569">
    <property type="entry name" value="RIBOSOMAL PROTEIN S9"/>
    <property type="match status" value="1"/>
</dbReference>
<dbReference type="PANTHER" id="PTHR21569:SF1">
    <property type="entry name" value="SMALL RIBOSOMAL SUBUNIT PROTEIN US9M"/>
    <property type="match status" value="1"/>
</dbReference>
<dbReference type="Pfam" id="PF00380">
    <property type="entry name" value="Ribosomal_S9"/>
    <property type="match status" value="1"/>
</dbReference>
<dbReference type="SUPFAM" id="SSF54211">
    <property type="entry name" value="Ribosomal protein S5 domain 2-like"/>
    <property type="match status" value="1"/>
</dbReference>
<dbReference type="PROSITE" id="PS00360">
    <property type="entry name" value="RIBOSOMAL_S9"/>
    <property type="match status" value="1"/>
</dbReference>
<name>RS9_BACC0</name>
<gene>
    <name evidence="1" type="primary">rpsI</name>
    <name type="ordered locus">BCAH820_0157</name>
</gene>
<proteinExistence type="inferred from homology"/>
<protein>
    <recommendedName>
        <fullName evidence="1">Small ribosomal subunit protein uS9</fullName>
    </recommendedName>
    <alternativeName>
        <fullName evidence="2">30S ribosomal protein S9</fullName>
    </alternativeName>
</protein>
<organism>
    <name type="scientific">Bacillus cereus (strain AH820)</name>
    <dbReference type="NCBI Taxonomy" id="405535"/>
    <lineage>
        <taxon>Bacteria</taxon>
        <taxon>Bacillati</taxon>
        <taxon>Bacillota</taxon>
        <taxon>Bacilli</taxon>
        <taxon>Bacillales</taxon>
        <taxon>Bacillaceae</taxon>
        <taxon>Bacillus</taxon>
        <taxon>Bacillus cereus group</taxon>
    </lineage>
</organism>
<keyword id="KW-0687">Ribonucleoprotein</keyword>
<keyword id="KW-0689">Ribosomal protein</keyword>
<feature type="chain" id="PRO_1000128074" description="Small ribosomal subunit protein uS9">
    <location>
        <begin position="1"/>
        <end position="130"/>
    </location>
</feature>
<accession>B7JKF4</accession>
<reference key="1">
    <citation type="submission" date="2008-10" db="EMBL/GenBank/DDBJ databases">
        <title>Genome sequence of Bacillus cereus AH820.</title>
        <authorList>
            <person name="Dodson R.J."/>
            <person name="Durkin A.S."/>
            <person name="Rosovitz M.J."/>
            <person name="Rasko D.A."/>
            <person name="Hoffmaster A."/>
            <person name="Ravel J."/>
            <person name="Sutton G."/>
        </authorList>
    </citation>
    <scope>NUCLEOTIDE SEQUENCE [LARGE SCALE GENOMIC DNA]</scope>
    <source>
        <strain>AH820</strain>
    </source>
</reference>
<comment type="similarity">
    <text evidence="1">Belongs to the universal ribosomal protein uS9 family.</text>
</comment>
<evidence type="ECO:0000255" key="1">
    <source>
        <dbReference type="HAMAP-Rule" id="MF_00532"/>
    </source>
</evidence>
<evidence type="ECO:0000305" key="2"/>